<sequence length="730" mass="82017">MMRHDRNVTEIDAETRPDENLWHSGDSAVGAPPAATPAAMTDLPEDRYLNRELSWLDFNARVLALADDNSLPLLERAKFLAIFASNLDEFYMVRVAGLKRRDEMGLSVRSADGLTPRKQLALIGEHTQRIATRHARVFLDSVRPALAEEGIHIVTWADLDQAERDELSTYFTEQVFPVLTPLAVDPAHPFPFVSGLSLNLAVMVRQTEDGGQHFARVKVPNNVDRFVELAAPRAGAEGENRGVVRFLPMEELIAAFLPLLFPGMEIVEHHAFRITRNADMEVEEDRDEDLLQALERELARRRFGPPVRLEIADDMTEGMLELLLRELDVHPGDVIEVPGLLDLSSLRQIYDLDRPALKDPAFVPDTHPAFADRESPKSIFATLREGDVLVHHPYDSFSTSVQRFIQQAAADPNVLAIKQTLYRTSGDSPIVRALIEAAEAGKQAVALVEIKARFDEQANIRWARALEQAGVHVVYGLVGLKTHCKTCLVVRREGSAIRRYCHIGTGNYNSKTARLYEDVGLLTAAPDIGADLTDLFNSLTGYSRKVSYRNLLVAPHGIRTGIIERVEREIAAHRERGQGRIRLKMNALVDEQVIDSLYRASQAGVRVEVVVRGICALRPGVQGYSENIFVRSILGRFLEHSRIIHFRNINEFWIGSADMMHRNLDRRVEVLAQVKDPKLTAQLDELFESALDPSTRCWELGPDGQWTPSPQEGHTVRDHQVSLMERHRSP</sequence>
<evidence type="ECO:0000255" key="1">
    <source>
        <dbReference type="HAMAP-Rule" id="MF_00347"/>
    </source>
</evidence>
<evidence type="ECO:0000256" key="2">
    <source>
        <dbReference type="SAM" id="MobiDB-lite"/>
    </source>
</evidence>
<accession>A0QJB3</accession>
<protein>
    <recommendedName>
        <fullName evidence="1">Polyphosphate kinase</fullName>
        <ecNumber evidence="1">2.7.4.1</ecNumber>
    </recommendedName>
    <alternativeName>
        <fullName evidence="1">ATP-polyphosphate phosphotransferase</fullName>
    </alternativeName>
    <alternativeName>
        <fullName evidence="1">Polyphosphoric acid kinase</fullName>
    </alternativeName>
</protein>
<comment type="function">
    <text evidence="1">Catalyzes the reversible transfer of the terminal phosphate of ATP to form a long-chain polyphosphate (polyP).</text>
</comment>
<comment type="catalytic activity">
    <reaction evidence="1">
        <text>[phosphate](n) + ATP = [phosphate](n+1) + ADP</text>
        <dbReference type="Rhea" id="RHEA:19573"/>
        <dbReference type="Rhea" id="RHEA-COMP:9859"/>
        <dbReference type="Rhea" id="RHEA-COMP:14280"/>
        <dbReference type="ChEBI" id="CHEBI:16838"/>
        <dbReference type="ChEBI" id="CHEBI:30616"/>
        <dbReference type="ChEBI" id="CHEBI:456216"/>
        <dbReference type="EC" id="2.7.4.1"/>
    </reaction>
</comment>
<comment type="cofactor">
    <cofactor evidence="1">
        <name>Mg(2+)</name>
        <dbReference type="ChEBI" id="CHEBI:18420"/>
    </cofactor>
</comment>
<comment type="PTM">
    <text evidence="1">An intermediate of this reaction is the autophosphorylated ppk in which a phosphate is covalently linked to a histidine residue through a N-P bond.</text>
</comment>
<comment type="similarity">
    <text evidence="1">Belongs to the polyphosphate kinase 1 (PPK1) family.</text>
</comment>
<reference key="1">
    <citation type="submission" date="2006-10" db="EMBL/GenBank/DDBJ databases">
        <authorList>
            <person name="Fleischmann R.D."/>
            <person name="Dodson R.J."/>
            <person name="Haft D.H."/>
            <person name="Merkel J.S."/>
            <person name="Nelson W.C."/>
            <person name="Fraser C.M."/>
        </authorList>
    </citation>
    <scope>NUCLEOTIDE SEQUENCE [LARGE SCALE GENOMIC DNA]</scope>
    <source>
        <strain>104</strain>
    </source>
</reference>
<feature type="chain" id="PRO_1000079363" description="Polyphosphate kinase">
    <location>
        <begin position="1"/>
        <end position="730"/>
    </location>
</feature>
<feature type="region of interest" description="Disordered" evidence="2">
    <location>
        <begin position="1"/>
        <end position="39"/>
    </location>
</feature>
<feature type="compositionally biased region" description="Basic and acidic residues" evidence="2">
    <location>
        <begin position="1"/>
        <end position="21"/>
    </location>
</feature>
<feature type="active site" description="Phosphohistidine intermediate" evidence="1">
    <location>
        <position position="483"/>
    </location>
</feature>
<feature type="binding site" evidence="1">
    <location>
        <position position="86"/>
    </location>
    <ligand>
        <name>ATP</name>
        <dbReference type="ChEBI" id="CHEBI:30616"/>
    </ligand>
</feature>
<feature type="binding site" evidence="1">
    <location>
        <position position="423"/>
    </location>
    <ligand>
        <name>Mg(2+)</name>
        <dbReference type="ChEBI" id="CHEBI:18420"/>
    </ligand>
</feature>
<feature type="binding site" evidence="1">
    <location>
        <position position="453"/>
    </location>
    <ligand>
        <name>Mg(2+)</name>
        <dbReference type="ChEBI" id="CHEBI:18420"/>
    </ligand>
</feature>
<feature type="binding site" evidence="1">
    <location>
        <position position="516"/>
    </location>
    <ligand>
        <name>ATP</name>
        <dbReference type="ChEBI" id="CHEBI:30616"/>
    </ligand>
</feature>
<feature type="binding site" evidence="1">
    <location>
        <position position="612"/>
    </location>
    <ligand>
        <name>ATP</name>
        <dbReference type="ChEBI" id="CHEBI:30616"/>
    </ligand>
</feature>
<feature type="binding site" evidence="1">
    <location>
        <position position="640"/>
    </location>
    <ligand>
        <name>ATP</name>
        <dbReference type="ChEBI" id="CHEBI:30616"/>
    </ligand>
</feature>
<gene>
    <name evidence="1" type="primary">ppk</name>
    <name type="ordered locus">MAV_3834</name>
</gene>
<name>PPK1_MYCA1</name>
<proteinExistence type="inferred from homology"/>
<dbReference type="EC" id="2.7.4.1" evidence="1"/>
<dbReference type="EMBL" id="CP000479">
    <property type="protein sequence ID" value="ABK68605.1"/>
    <property type="molecule type" value="Genomic_DNA"/>
</dbReference>
<dbReference type="RefSeq" id="WP_011725705.1">
    <property type="nucleotide sequence ID" value="NC_008595.1"/>
</dbReference>
<dbReference type="SMR" id="A0QJB3"/>
<dbReference type="KEGG" id="mav:MAV_3834"/>
<dbReference type="HOGENOM" id="CLU_009678_4_2_11"/>
<dbReference type="Proteomes" id="UP000001574">
    <property type="component" value="Chromosome"/>
</dbReference>
<dbReference type="GO" id="GO:0009358">
    <property type="term" value="C:polyphosphate kinase complex"/>
    <property type="evidence" value="ECO:0007669"/>
    <property type="project" value="InterPro"/>
</dbReference>
<dbReference type="GO" id="GO:0005524">
    <property type="term" value="F:ATP binding"/>
    <property type="evidence" value="ECO:0007669"/>
    <property type="project" value="UniProtKB-KW"/>
</dbReference>
<dbReference type="GO" id="GO:0046872">
    <property type="term" value="F:metal ion binding"/>
    <property type="evidence" value="ECO:0007669"/>
    <property type="project" value="UniProtKB-KW"/>
</dbReference>
<dbReference type="GO" id="GO:0008976">
    <property type="term" value="F:polyphosphate kinase activity"/>
    <property type="evidence" value="ECO:0007669"/>
    <property type="project" value="UniProtKB-UniRule"/>
</dbReference>
<dbReference type="GO" id="GO:0006799">
    <property type="term" value="P:polyphosphate biosynthetic process"/>
    <property type="evidence" value="ECO:0007669"/>
    <property type="project" value="UniProtKB-UniRule"/>
</dbReference>
<dbReference type="CDD" id="cd09165">
    <property type="entry name" value="PLDc_PaPPK1_C1_like"/>
    <property type="match status" value="1"/>
</dbReference>
<dbReference type="FunFam" id="3.30.1840.10:FF:000002">
    <property type="entry name" value="Polyphosphate kinase"/>
    <property type="match status" value="1"/>
</dbReference>
<dbReference type="FunFam" id="3.30.870.10:FF:000001">
    <property type="entry name" value="Polyphosphate kinase"/>
    <property type="match status" value="1"/>
</dbReference>
<dbReference type="Gene3D" id="3.30.870.10">
    <property type="entry name" value="Endonuclease Chain A"/>
    <property type="match status" value="2"/>
</dbReference>
<dbReference type="Gene3D" id="3.30.1840.10">
    <property type="entry name" value="Polyphosphate kinase middle domain"/>
    <property type="match status" value="1"/>
</dbReference>
<dbReference type="Gene3D" id="1.20.58.310">
    <property type="entry name" value="Polyphosphate kinase N-terminal domain"/>
    <property type="match status" value="1"/>
</dbReference>
<dbReference type="HAMAP" id="MF_00347">
    <property type="entry name" value="Polyphosphate_kinase"/>
    <property type="match status" value="1"/>
</dbReference>
<dbReference type="InterPro" id="IPR003414">
    <property type="entry name" value="PP_kinase"/>
</dbReference>
<dbReference type="InterPro" id="IPR041108">
    <property type="entry name" value="PP_kinase_C_1"/>
</dbReference>
<dbReference type="InterPro" id="IPR024953">
    <property type="entry name" value="PP_kinase_middle"/>
</dbReference>
<dbReference type="InterPro" id="IPR036830">
    <property type="entry name" value="PP_kinase_middle_dom_sf"/>
</dbReference>
<dbReference type="InterPro" id="IPR025200">
    <property type="entry name" value="PPK_C_dom2"/>
</dbReference>
<dbReference type="InterPro" id="IPR025198">
    <property type="entry name" value="PPK_N_dom"/>
</dbReference>
<dbReference type="InterPro" id="IPR036832">
    <property type="entry name" value="PPK_N_dom_sf"/>
</dbReference>
<dbReference type="NCBIfam" id="TIGR03705">
    <property type="entry name" value="poly_P_kin"/>
    <property type="match status" value="1"/>
</dbReference>
<dbReference type="NCBIfam" id="NF003917">
    <property type="entry name" value="PRK05443.1-1"/>
    <property type="match status" value="1"/>
</dbReference>
<dbReference type="NCBIfam" id="NF003918">
    <property type="entry name" value="PRK05443.1-2"/>
    <property type="match status" value="1"/>
</dbReference>
<dbReference type="NCBIfam" id="NF003921">
    <property type="entry name" value="PRK05443.2-2"/>
    <property type="match status" value="1"/>
</dbReference>
<dbReference type="NCBIfam" id="NF003922">
    <property type="entry name" value="PRK05443.2-3"/>
    <property type="match status" value="1"/>
</dbReference>
<dbReference type="PANTHER" id="PTHR30218">
    <property type="entry name" value="POLYPHOSPHATE KINASE"/>
    <property type="match status" value="1"/>
</dbReference>
<dbReference type="PANTHER" id="PTHR30218:SF0">
    <property type="entry name" value="POLYPHOSPHATE KINASE"/>
    <property type="match status" value="1"/>
</dbReference>
<dbReference type="Pfam" id="PF02503">
    <property type="entry name" value="PP_kinase"/>
    <property type="match status" value="1"/>
</dbReference>
<dbReference type="Pfam" id="PF13090">
    <property type="entry name" value="PP_kinase_C"/>
    <property type="match status" value="1"/>
</dbReference>
<dbReference type="Pfam" id="PF17941">
    <property type="entry name" value="PP_kinase_C_1"/>
    <property type="match status" value="1"/>
</dbReference>
<dbReference type="Pfam" id="PF13089">
    <property type="entry name" value="PP_kinase_N"/>
    <property type="match status" value="1"/>
</dbReference>
<dbReference type="PIRSF" id="PIRSF015589">
    <property type="entry name" value="PP_kinase"/>
    <property type="match status" value="1"/>
</dbReference>
<dbReference type="SUPFAM" id="SSF56024">
    <property type="entry name" value="Phospholipase D/nuclease"/>
    <property type="match status" value="2"/>
</dbReference>
<dbReference type="SUPFAM" id="SSF143724">
    <property type="entry name" value="PHP14-like"/>
    <property type="match status" value="1"/>
</dbReference>
<dbReference type="SUPFAM" id="SSF140356">
    <property type="entry name" value="PPK N-terminal domain-like"/>
    <property type="match status" value="1"/>
</dbReference>
<organism>
    <name type="scientific">Mycobacterium avium (strain 104)</name>
    <dbReference type="NCBI Taxonomy" id="243243"/>
    <lineage>
        <taxon>Bacteria</taxon>
        <taxon>Bacillati</taxon>
        <taxon>Actinomycetota</taxon>
        <taxon>Actinomycetes</taxon>
        <taxon>Mycobacteriales</taxon>
        <taxon>Mycobacteriaceae</taxon>
        <taxon>Mycobacterium</taxon>
        <taxon>Mycobacterium avium complex (MAC)</taxon>
    </lineage>
</organism>
<keyword id="KW-0067">ATP-binding</keyword>
<keyword id="KW-0418">Kinase</keyword>
<keyword id="KW-0460">Magnesium</keyword>
<keyword id="KW-0479">Metal-binding</keyword>
<keyword id="KW-0547">Nucleotide-binding</keyword>
<keyword id="KW-0597">Phosphoprotein</keyword>
<keyword id="KW-0808">Transferase</keyword>